<sequence>MAIHLYKTSTPSTRNGAVDSQVKSNPRNNLIYGQHRCGKGRNARGIITAGHRGGGHKRLYRKIDFRRNKKNIEGRIVTIEYDPNRNAYICLIHYGDGEKRYILHPRGAIIGDSIVSGTEVSIKMGNALRLGNALPLTDMPLGTAIHNIEITLGKGGQLARAAGAVAKLIAKEGKSATLKLPSGEVRLISKNCSATFGQVGNVGVNQKSLGRAGSKCWLGKRPVVRGVVMNPVDHPHGGGEGRAPIGRKNPTTPWGYPALGRRSRKRNKYSDSLILRRRTK</sequence>
<proteinExistence type="inferred from homology"/>
<dbReference type="EMBL" id="DQ923116">
    <property type="protein sequence ID" value="ABI49821.1"/>
    <property type="molecule type" value="Genomic_DNA"/>
</dbReference>
<dbReference type="EMBL" id="DQ923116">
    <property type="protein sequence ID" value="ABI49842.1"/>
    <property type="molecule type" value="Genomic_DNA"/>
</dbReference>
<dbReference type="SMR" id="Q09FY3"/>
<dbReference type="GO" id="GO:0009507">
    <property type="term" value="C:chloroplast"/>
    <property type="evidence" value="ECO:0007669"/>
    <property type="project" value="UniProtKB-SubCell"/>
</dbReference>
<dbReference type="GO" id="GO:0005762">
    <property type="term" value="C:mitochondrial large ribosomal subunit"/>
    <property type="evidence" value="ECO:0007669"/>
    <property type="project" value="TreeGrafter"/>
</dbReference>
<dbReference type="GO" id="GO:0019843">
    <property type="term" value="F:rRNA binding"/>
    <property type="evidence" value="ECO:0007669"/>
    <property type="project" value="UniProtKB-UniRule"/>
</dbReference>
<dbReference type="GO" id="GO:0003735">
    <property type="term" value="F:structural constituent of ribosome"/>
    <property type="evidence" value="ECO:0007669"/>
    <property type="project" value="InterPro"/>
</dbReference>
<dbReference type="GO" id="GO:0016740">
    <property type="term" value="F:transferase activity"/>
    <property type="evidence" value="ECO:0007669"/>
    <property type="project" value="InterPro"/>
</dbReference>
<dbReference type="GO" id="GO:0032543">
    <property type="term" value="P:mitochondrial translation"/>
    <property type="evidence" value="ECO:0007669"/>
    <property type="project" value="TreeGrafter"/>
</dbReference>
<dbReference type="FunFam" id="4.10.950.10:FF:000001">
    <property type="entry name" value="50S ribosomal protein L2"/>
    <property type="match status" value="1"/>
</dbReference>
<dbReference type="FunFam" id="2.30.30.30:FF:000008">
    <property type="entry name" value="50S ribosomal protein L2, chloroplastic"/>
    <property type="match status" value="1"/>
</dbReference>
<dbReference type="FunFam" id="2.40.50.140:FF:000029">
    <property type="entry name" value="50S ribosomal protein L2, chloroplastic"/>
    <property type="match status" value="1"/>
</dbReference>
<dbReference type="Gene3D" id="2.30.30.30">
    <property type="match status" value="1"/>
</dbReference>
<dbReference type="Gene3D" id="2.40.50.140">
    <property type="entry name" value="Nucleic acid-binding proteins"/>
    <property type="match status" value="1"/>
</dbReference>
<dbReference type="Gene3D" id="4.10.950.10">
    <property type="entry name" value="Ribosomal protein L2, domain 3"/>
    <property type="match status" value="1"/>
</dbReference>
<dbReference type="HAMAP" id="MF_01320_B">
    <property type="entry name" value="Ribosomal_uL2_B"/>
    <property type="match status" value="1"/>
</dbReference>
<dbReference type="InterPro" id="IPR012340">
    <property type="entry name" value="NA-bd_OB-fold"/>
</dbReference>
<dbReference type="InterPro" id="IPR014722">
    <property type="entry name" value="Rib_uL2_dom2"/>
</dbReference>
<dbReference type="InterPro" id="IPR002171">
    <property type="entry name" value="Ribosomal_uL2"/>
</dbReference>
<dbReference type="InterPro" id="IPR005880">
    <property type="entry name" value="Ribosomal_uL2_bac/org-type"/>
</dbReference>
<dbReference type="InterPro" id="IPR022669">
    <property type="entry name" value="Ribosomal_uL2_C"/>
</dbReference>
<dbReference type="InterPro" id="IPR022671">
    <property type="entry name" value="Ribosomal_uL2_CS"/>
</dbReference>
<dbReference type="InterPro" id="IPR014726">
    <property type="entry name" value="Ribosomal_uL2_dom3"/>
</dbReference>
<dbReference type="InterPro" id="IPR022666">
    <property type="entry name" value="Ribosomal_uL2_RNA-bd_dom"/>
</dbReference>
<dbReference type="InterPro" id="IPR008991">
    <property type="entry name" value="Translation_prot_SH3-like_sf"/>
</dbReference>
<dbReference type="NCBIfam" id="TIGR01171">
    <property type="entry name" value="rplB_bact"/>
    <property type="match status" value="1"/>
</dbReference>
<dbReference type="PANTHER" id="PTHR13691:SF5">
    <property type="entry name" value="LARGE RIBOSOMAL SUBUNIT PROTEIN UL2M"/>
    <property type="match status" value="1"/>
</dbReference>
<dbReference type="PANTHER" id="PTHR13691">
    <property type="entry name" value="RIBOSOMAL PROTEIN L2"/>
    <property type="match status" value="1"/>
</dbReference>
<dbReference type="Pfam" id="PF00181">
    <property type="entry name" value="Ribosomal_L2"/>
    <property type="match status" value="1"/>
</dbReference>
<dbReference type="Pfam" id="PF03947">
    <property type="entry name" value="Ribosomal_L2_C"/>
    <property type="match status" value="1"/>
</dbReference>
<dbReference type="PIRSF" id="PIRSF002158">
    <property type="entry name" value="Ribosomal_L2"/>
    <property type="match status" value="1"/>
</dbReference>
<dbReference type="SMART" id="SM01383">
    <property type="entry name" value="Ribosomal_L2"/>
    <property type="match status" value="1"/>
</dbReference>
<dbReference type="SMART" id="SM01382">
    <property type="entry name" value="Ribosomal_L2_C"/>
    <property type="match status" value="1"/>
</dbReference>
<dbReference type="SUPFAM" id="SSF50249">
    <property type="entry name" value="Nucleic acid-binding proteins"/>
    <property type="match status" value="1"/>
</dbReference>
<dbReference type="SUPFAM" id="SSF50104">
    <property type="entry name" value="Translation proteins SH3-like domain"/>
    <property type="match status" value="1"/>
</dbReference>
<dbReference type="PROSITE" id="PS00467">
    <property type="entry name" value="RIBOSOMAL_L2"/>
    <property type="match status" value="1"/>
</dbReference>
<organism>
    <name type="scientific">Platanus occidentalis</name>
    <name type="common">Sycamore</name>
    <name type="synonym">American plane tree</name>
    <dbReference type="NCBI Taxonomy" id="4403"/>
    <lineage>
        <taxon>Eukaryota</taxon>
        <taxon>Viridiplantae</taxon>
        <taxon>Streptophyta</taxon>
        <taxon>Embryophyta</taxon>
        <taxon>Tracheophyta</taxon>
        <taxon>Spermatophyta</taxon>
        <taxon>Magnoliopsida</taxon>
        <taxon>Proteales</taxon>
        <taxon>Platanaceae</taxon>
        <taxon>Platanus</taxon>
    </lineage>
</organism>
<geneLocation type="chloroplast"/>
<keyword id="KW-0150">Chloroplast</keyword>
<keyword id="KW-0934">Plastid</keyword>
<keyword id="KW-0687">Ribonucleoprotein</keyword>
<keyword id="KW-0689">Ribosomal protein</keyword>
<name>RK2_PLAOC</name>
<gene>
    <name type="primary">rpl2-A</name>
</gene>
<gene>
    <name type="primary">rpl2-B</name>
</gene>
<reference key="1">
    <citation type="journal article" date="2006" name="BMC Plant Biol.">
        <title>Rapid and accurate pyrosequencing of angiosperm plastid genomes.</title>
        <authorList>
            <person name="Moore M.J."/>
            <person name="Dhingra A."/>
            <person name="Soltis P.S."/>
            <person name="Shaw R."/>
            <person name="Farmerie W.G."/>
            <person name="Folta K.M."/>
            <person name="Soltis D.E."/>
        </authorList>
    </citation>
    <scope>NUCLEOTIDE SEQUENCE [LARGE SCALE GENOMIC DNA]</scope>
</reference>
<protein>
    <recommendedName>
        <fullName evidence="2">Large ribosomal subunit protein uL2cz/uL2cy</fullName>
    </recommendedName>
    <alternativeName>
        <fullName evidence="4">50S ribosomal protein L2, chloroplastic</fullName>
    </alternativeName>
</protein>
<evidence type="ECO:0000250" key="1"/>
<evidence type="ECO:0000255" key="2">
    <source>
        <dbReference type="HAMAP-Rule" id="MF_01320"/>
    </source>
</evidence>
<evidence type="ECO:0000256" key="3">
    <source>
        <dbReference type="SAM" id="MobiDB-lite"/>
    </source>
</evidence>
<evidence type="ECO:0000305" key="4"/>
<feature type="chain" id="PRO_0000310086" description="Large ribosomal subunit protein uL2cz/uL2cy">
    <location>
        <begin position="1"/>
        <end position="280"/>
    </location>
</feature>
<feature type="region of interest" description="Disordered" evidence="3">
    <location>
        <begin position="1"/>
        <end position="25"/>
    </location>
</feature>
<feature type="region of interest" description="Disordered" evidence="3">
    <location>
        <begin position="231"/>
        <end position="280"/>
    </location>
</feature>
<comment type="subunit">
    <text evidence="1">Part of the 50S ribosomal subunit.</text>
</comment>
<comment type="subcellular location">
    <subcellularLocation>
        <location>Plastid</location>
        <location>Chloroplast</location>
    </subcellularLocation>
</comment>
<comment type="similarity">
    <text evidence="4">Belongs to the universal ribosomal protein uL2 family.</text>
</comment>
<accession>Q09FY3</accession>